<comment type="function">
    <text evidence="1">Catalyzes a trans-dehydration via an enolate intermediate.</text>
</comment>
<comment type="catalytic activity">
    <reaction evidence="1">
        <text>3-dehydroquinate = 3-dehydroshikimate + H2O</text>
        <dbReference type="Rhea" id="RHEA:21096"/>
        <dbReference type="ChEBI" id="CHEBI:15377"/>
        <dbReference type="ChEBI" id="CHEBI:16630"/>
        <dbReference type="ChEBI" id="CHEBI:32364"/>
        <dbReference type="EC" id="4.2.1.10"/>
    </reaction>
</comment>
<comment type="pathway">
    <text evidence="1">Metabolic intermediate biosynthesis; chorismate biosynthesis; chorismate from D-erythrose 4-phosphate and phosphoenolpyruvate: step 3/7.</text>
</comment>
<comment type="subunit">
    <text evidence="1">Homododecamer.</text>
</comment>
<comment type="similarity">
    <text evidence="1">Belongs to the type-II 3-dehydroquinase family.</text>
</comment>
<name>AROQ_BACCZ</name>
<gene>
    <name evidence="1" type="primary">aroQ</name>
    <name type="ordered locus">BCE33L3952</name>
</gene>
<dbReference type="EC" id="4.2.1.10" evidence="1"/>
<dbReference type="EMBL" id="CP000001">
    <property type="protein sequence ID" value="AAU16316.1"/>
    <property type="molecule type" value="Genomic_DNA"/>
</dbReference>
<dbReference type="RefSeq" id="WP_000757082.1">
    <property type="nucleotide sequence ID" value="NZ_CP009968.1"/>
</dbReference>
<dbReference type="SMR" id="Q634Y5"/>
<dbReference type="GeneID" id="45024083"/>
<dbReference type="KEGG" id="bcz:BCE33L3952"/>
<dbReference type="PATRIC" id="fig|288681.22.peg.1444"/>
<dbReference type="UniPathway" id="UPA00053">
    <property type="reaction ID" value="UER00086"/>
</dbReference>
<dbReference type="Proteomes" id="UP000002612">
    <property type="component" value="Chromosome"/>
</dbReference>
<dbReference type="GO" id="GO:0003855">
    <property type="term" value="F:3-dehydroquinate dehydratase activity"/>
    <property type="evidence" value="ECO:0007669"/>
    <property type="project" value="UniProtKB-UniRule"/>
</dbReference>
<dbReference type="GO" id="GO:0008652">
    <property type="term" value="P:amino acid biosynthetic process"/>
    <property type="evidence" value="ECO:0007669"/>
    <property type="project" value="UniProtKB-KW"/>
</dbReference>
<dbReference type="GO" id="GO:0009073">
    <property type="term" value="P:aromatic amino acid family biosynthetic process"/>
    <property type="evidence" value="ECO:0007669"/>
    <property type="project" value="UniProtKB-KW"/>
</dbReference>
<dbReference type="GO" id="GO:0009423">
    <property type="term" value="P:chorismate biosynthetic process"/>
    <property type="evidence" value="ECO:0007669"/>
    <property type="project" value="UniProtKB-UniRule"/>
</dbReference>
<dbReference type="GO" id="GO:0019631">
    <property type="term" value="P:quinate catabolic process"/>
    <property type="evidence" value="ECO:0007669"/>
    <property type="project" value="TreeGrafter"/>
</dbReference>
<dbReference type="CDD" id="cd00466">
    <property type="entry name" value="DHQase_II"/>
    <property type="match status" value="1"/>
</dbReference>
<dbReference type="Gene3D" id="3.40.50.9100">
    <property type="entry name" value="Dehydroquinase, class II"/>
    <property type="match status" value="1"/>
</dbReference>
<dbReference type="HAMAP" id="MF_00169">
    <property type="entry name" value="AroQ"/>
    <property type="match status" value="1"/>
</dbReference>
<dbReference type="InterPro" id="IPR001874">
    <property type="entry name" value="DHquinase_II"/>
</dbReference>
<dbReference type="InterPro" id="IPR018509">
    <property type="entry name" value="DHquinase_II_CS"/>
</dbReference>
<dbReference type="InterPro" id="IPR036441">
    <property type="entry name" value="DHquinase_II_sf"/>
</dbReference>
<dbReference type="NCBIfam" id="TIGR01088">
    <property type="entry name" value="aroQ"/>
    <property type="match status" value="1"/>
</dbReference>
<dbReference type="NCBIfam" id="NF003805">
    <property type="entry name" value="PRK05395.1-2"/>
    <property type="match status" value="1"/>
</dbReference>
<dbReference type="NCBIfam" id="NF003806">
    <property type="entry name" value="PRK05395.1-3"/>
    <property type="match status" value="1"/>
</dbReference>
<dbReference type="NCBIfam" id="NF003807">
    <property type="entry name" value="PRK05395.1-4"/>
    <property type="match status" value="1"/>
</dbReference>
<dbReference type="PANTHER" id="PTHR21272">
    <property type="entry name" value="CATABOLIC 3-DEHYDROQUINASE"/>
    <property type="match status" value="1"/>
</dbReference>
<dbReference type="PANTHER" id="PTHR21272:SF3">
    <property type="entry name" value="CATABOLIC 3-DEHYDROQUINASE"/>
    <property type="match status" value="1"/>
</dbReference>
<dbReference type="Pfam" id="PF01220">
    <property type="entry name" value="DHquinase_II"/>
    <property type="match status" value="1"/>
</dbReference>
<dbReference type="PIRSF" id="PIRSF001399">
    <property type="entry name" value="DHquinase_II"/>
    <property type="match status" value="1"/>
</dbReference>
<dbReference type="SUPFAM" id="SSF52304">
    <property type="entry name" value="Type II 3-dehydroquinate dehydratase"/>
    <property type="match status" value="1"/>
</dbReference>
<dbReference type="PROSITE" id="PS01029">
    <property type="entry name" value="DEHYDROQUINASE_II"/>
    <property type="match status" value="1"/>
</dbReference>
<proteinExistence type="inferred from homology"/>
<feature type="chain" id="PRO_1000023450" description="3-dehydroquinate dehydratase">
    <location>
        <begin position="1"/>
        <end position="146"/>
    </location>
</feature>
<feature type="active site" description="Proton acceptor" evidence="1">
    <location>
        <position position="23"/>
    </location>
</feature>
<feature type="active site" description="Proton donor" evidence="1">
    <location>
        <position position="100"/>
    </location>
</feature>
<feature type="binding site" evidence="1">
    <location>
        <position position="74"/>
    </location>
    <ligand>
        <name>substrate</name>
    </ligand>
</feature>
<feature type="binding site" evidence="1">
    <location>
        <position position="80"/>
    </location>
    <ligand>
        <name>substrate</name>
    </ligand>
</feature>
<feature type="binding site" evidence="1">
    <location>
        <position position="87"/>
    </location>
    <ligand>
        <name>substrate</name>
    </ligand>
</feature>
<feature type="binding site" evidence="1">
    <location>
        <begin position="101"/>
        <end position="102"/>
    </location>
    <ligand>
        <name>substrate</name>
    </ligand>
</feature>
<feature type="binding site" evidence="1">
    <location>
        <position position="111"/>
    </location>
    <ligand>
        <name>substrate</name>
    </ligand>
</feature>
<feature type="site" description="Transition state stabilizer" evidence="1">
    <location>
        <position position="18"/>
    </location>
</feature>
<sequence>MKKVLLVNGPNLNRLGVREVNVYGKGTLATLEADMKQEAEAMGVELECFQSNHEGAIIDRIHEAEDIYEGIILNPGAFTHYSYAIRDAIASISIPVIEVHISNIHQRESFRHESVTAAVCAGQIVGFGFYGYKLALFALMEKLREA</sequence>
<evidence type="ECO:0000255" key="1">
    <source>
        <dbReference type="HAMAP-Rule" id="MF_00169"/>
    </source>
</evidence>
<keyword id="KW-0028">Amino-acid biosynthesis</keyword>
<keyword id="KW-0057">Aromatic amino acid biosynthesis</keyword>
<keyword id="KW-0456">Lyase</keyword>
<accession>Q634Y5</accession>
<organism>
    <name type="scientific">Bacillus cereus (strain ZK / E33L)</name>
    <dbReference type="NCBI Taxonomy" id="288681"/>
    <lineage>
        <taxon>Bacteria</taxon>
        <taxon>Bacillati</taxon>
        <taxon>Bacillota</taxon>
        <taxon>Bacilli</taxon>
        <taxon>Bacillales</taxon>
        <taxon>Bacillaceae</taxon>
        <taxon>Bacillus</taxon>
        <taxon>Bacillus cereus group</taxon>
    </lineage>
</organism>
<reference key="1">
    <citation type="journal article" date="2006" name="J. Bacteriol.">
        <title>Pathogenomic sequence analysis of Bacillus cereus and Bacillus thuringiensis isolates closely related to Bacillus anthracis.</title>
        <authorList>
            <person name="Han C.S."/>
            <person name="Xie G."/>
            <person name="Challacombe J.F."/>
            <person name="Altherr M.R."/>
            <person name="Bhotika S.S."/>
            <person name="Bruce D."/>
            <person name="Campbell C.S."/>
            <person name="Campbell M.L."/>
            <person name="Chen J."/>
            <person name="Chertkov O."/>
            <person name="Cleland C."/>
            <person name="Dimitrijevic M."/>
            <person name="Doggett N.A."/>
            <person name="Fawcett J.J."/>
            <person name="Glavina T."/>
            <person name="Goodwin L.A."/>
            <person name="Hill K.K."/>
            <person name="Hitchcock P."/>
            <person name="Jackson P.J."/>
            <person name="Keim P."/>
            <person name="Kewalramani A.R."/>
            <person name="Longmire J."/>
            <person name="Lucas S."/>
            <person name="Malfatti S."/>
            <person name="McMurry K."/>
            <person name="Meincke L.J."/>
            <person name="Misra M."/>
            <person name="Moseman B.L."/>
            <person name="Mundt M."/>
            <person name="Munk A.C."/>
            <person name="Okinaka R.T."/>
            <person name="Parson-Quintana B."/>
            <person name="Reilly L.P."/>
            <person name="Richardson P."/>
            <person name="Robinson D.L."/>
            <person name="Rubin E."/>
            <person name="Saunders E."/>
            <person name="Tapia R."/>
            <person name="Tesmer J.G."/>
            <person name="Thayer N."/>
            <person name="Thompson L.S."/>
            <person name="Tice H."/>
            <person name="Ticknor L.O."/>
            <person name="Wills P.L."/>
            <person name="Brettin T.S."/>
            <person name="Gilna P."/>
        </authorList>
    </citation>
    <scope>NUCLEOTIDE SEQUENCE [LARGE SCALE GENOMIC DNA]</scope>
    <source>
        <strain>ZK / E33L</strain>
    </source>
</reference>
<protein>
    <recommendedName>
        <fullName evidence="1">3-dehydroquinate dehydratase</fullName>
        <shortName evidence="1">3-dehydroquinase</shortName>
        <ecNumber evidence="1">4.2.1.10</ecNumber>
    </recommendedName>
    <alternativeName>
        <fullName evidence="1">Type II DHQase</fullName>
    </alternativeName>
</protein>